<accession>P0CV74</accession>
<name>PSE1_PHYNI</name>
<sequence length="145" mass="16425">MRLSSFIVVGAAVVNLLTSGSVVVAAFPRVSDVSAMAIAPHRMDQGATNGGKRLLRYHSNNNRGGDEDIAEERGIFDFKNLEMLTNLARLNKANNLDSRLDDFFQALIKAKVNPTNIHHTRLDQDDYLELRQLFRTWYTFYHRAS</sequence>
<protein>
    <recommendedName>
        <fullName evidence="4">Secreted RxLR effector protein PSE1</fullName>
    </recommendedName>
    <alternativeName>
        <fullName evidence="4">Penetration-specific effector 1</fullName>
    </alternativeName>
</protein>
<evidence type="ECO:0000255" key="1"/>
<evidence type="ECO:0000269" key="2">
    <source>
    </source>
</evidence>
<evidence type="ECO:0000269" key="3">
    <source>
    </source>
</evidence>
<evidence type="ECO:0000303" key="4">
    <source>
    </source>
</evidence>
<evidence type="ECO:0000305" key="5"/>
<evidence type="ECO:0000305" key="6">
    <source>
    </source>
</evidence>
<dbReference type="EMBL" id="FK937603">
    <property type="status" value="NOT_ANNOTATED_CDS"/>
    <property type="molecule type" value="mRNA"/>
</dbReference>
<dbReference type="VEuPathDB" id="FungiDB:PPTG_07218"/>
<dbReference type="GO" id="GO:0005576">
    <property type="term" value="C:extracellular region"/>
    <property type="evidence" value="ECO:0007669"/>
    <property type="project" value="UniProtKB-SubCell"/>
</dbReference>
<dbReference type="GO" id="GO:0043657">
    <property type="term" value="C:host cell"/>
    <property type="evidence" value="ECO:0007669"/>
    <property type="project" value="UniProtKB-SubCell"/>
</dbReference>
<dbReference type="InterPro" id="IPR031825">
    <property type="entry name" value="RXLR"/>
</dbReference>
<dbReference type="Pfam" id="PF16810">
    <property type="entry name" value="RXLR"/>
    <property type="match status" value="1"/>
</dbReference>
<proteinExistence type="evidence at transcript level"/>
<reference key="1">
    <citation type="journal article" date="2010" name="New Phytol.">
        <title>Cellular and molecular characterization of Phytophthora parasitica appressorium-mediated penetration.</title>
        <authorList>
            <person name="Kebdani N."/>
            <person name="Pieuchot L."/>
            <person name="Deleury E."/>
            <person name="Panabieres F."/>
            <person name="Le Berre J.Y."/>
            <person name="Gourgues M."/>
        </authorList>
    </citation>
    <scope>NUCLEOTIDE SEQUENCE [MRNA]</scope>
    <scope>DOMAIN</scope>
    <scope>INDUCTION</scope>
    <scope>FUNCTION</scope>
</reference>
<reference key="2">
    <citation type="journal article" date="2013" name="New Phytol.">
        <title>The Phytophthora parasitica RXLR effector penetration-specific effector 1 favours Arabidopsis thaliana infection by interfering with auxin physiology.</title>
        <authorList>
            <person name="Evangelisti E."/>
            <person name="Govetto B."/>
            <person name="Minet-Kebdani N."/>
            <person name="Kuhn M.L."/>
            <person name="Attard A."/>
            <person name="Ponchet M."/>
            <person name="Panabieres F."/>
            <person name="Gourgues M."/>
        </authorList>
    </citation>
    <scope>FUNCTION</scope>
    <scope>INDUCTION</scope>
    <scope>SUBCELLULAR LOCATION</scope>
</reference>
<keyword id="KW-0964">Secreted</keyword>
<keyword id="KW-0732">Signal</keyword>
<keyword id="KW-0843">Virulence</keyword>
<comment type="function">
    <text evidence="2 3">Secreted effector that impairs both plant effector-triggered immunity and pathogen-associated molecular patterns (PAMP)-triggered immunity (PTI) (PubMed:23594295). Suppresses plant cell death as a part of the plant defense responses (PubMed:23594295). Facilitates plant infection by altering the auxin content at the roots penetration points of the of the pathogen (PubMed:19807870, PubMed:23594295).</text>
</comment>
<comment type="subcellular location">
    <subcellularLocation>
        <location evidence="3">Secreted</location>
    </subcellularLocation>
    <subcellularLocation>
        <location evidence="3">Host cell</location>
    </subcellularLocation>
</comment>
<comment type="induction">
    <text evidence="2 3">Specifically expressed during the first hours of infection of the host plant (PubMed:19807870, PubMed:23594295). Expression is induced during the appressorium-mediated penetration of host roots and peaks during the penetration process (PubMed:23594295). Expression then declines during early biotrophy, and becomes barely detectable during the invasive growth of the oomycete along the stele, and later during the necrotrophic phase of the infection (PubMed:23594295).</text>
</comment>
<comment type="domain">
    <text evidence="6">The RxLR-dEER motif acts to carry the protein into the host cell cytoplasm through binding to cell surface phosphatidylinositol-3-phosphate.</text>
</comment>
<comment type="similarity">
    <text evidence="5">Belongs to the RxLR effector family.</text>
</comment>
<organism>
    <name type="scientific">Phytophthora nicotianae</name>
    <name type="common">Potato buckeye rot agent</name>
    <name type="synonym">Phytophthora parasitica</name>
    <dbReference type="NCBI Taxonomy" id="4792"/>
    <lineage>
        <taxon>Eukaryota</taxon>
        <taxon>Sar</taxon>
        <taxon>Stramenopiles</taxon>
        <taxon>Oomycota</taxon>
        <taxon>Peronosporales</taxon>
        <taxon>Peronosporaceae</taxon>
        <taxon>Phytophthora</taxon>
    </lineage>
</organism>
<gene>
    <name evidence="4" type="primary">PSE1</name>
</gene>
<feature type="signal peptide" evidence="1">
    <location>
        <begin position="1"/>
        <end position="21"/>
    </location>
</feature>
<feature type="chain" id="PRO_0000448276" description="Secreted RxLR effector protein PSE1">
    <location>
        <begin position="22"/>
        <end position="145"/>
    </location>
</feature>
<feature type="short sequence motif" description="RxLR-dEER" evidence="6">
    <location>
        <begin position="53"/>
        <end position="73"/>
    </location>
</feature>